<feature type="chain" id="PRO_0000190430" description="Recombination protein RecR">
    <location>
        <begin position="1"/>
        <end position="198"/>
    </location>
</feature>
<feature type="domain" description="Toprim" evidence="1">
    <location>
        <begin position="79"/>
        <end position="174"/>
    </location>
</feature>
<feature type="zinc finger region" description="C4-type" evidence="1">
    <location>
        <begin position="56"/>
        <end position="71"/>
    </location>
</feature>
<reference key="1">
    <citation type="journal article" date="2000" name="Nature">
        <title>The genome sequence of the plant pathogen Xylella fastidiosa.</title>
        <authorList>
            <person name="Simpson A.J.G."/>
            <person name="Reinach F.C."/>
            <person name="Arruda P."/>
            <person name="Abreu F.A."/>
            <person name="Acencio M."/>
            <person name="Alvarenga R."/>
            <person name="Alves L.M.C."/>
            <person name="Araya J.E."/>
            <person name="Baia G.S."/>
            <person name="Baptista C.S."/>
            <person name="Barros M.H."/>
            <person name="Bonaccorsi E.D."/>
            <person name="Bordin S."/>
            <person name="Bove J.M."/>
            <person name="Briones M.R.S."/>
            <person name="Bueno M.R.P."/>
            <person name="Camargo A.A."/>
            <person name="Camargo L.E.A."/>
            <person name="Carraro D.M."/>
            <person name="Carrer H."/>
            <person name="Colauto N.B."/>
            <person name="Colombo C."/>
            <person name="Costa F.F."/>
            <person name="Costa M.C.R."/>
            <person name="Costa-Neto C.M."/>
            <person name="Coutinho L.L."/>
            <person name="Cristofani M."/>
            <person name="Dias-Neto E."/>
            <person name="Docena C."/>
            <person name="El-Dorry H."/>
            <person name="Facincani A.P."/>
            <person name="Ferreira A.J.S."/>
            <person name="Ferreira V.C.A."/>
            <person name="Ferro J.A."/>
            <person name="Fraga J.S."/>
            <person name="Franca S.C."/>
            <person name="Franco M.C."/>
            <person name="Frohme M."/>
            <person name="Furlan L.R."/>
            <person name="Garnier M."/>
            <person name="Goldman G.H."/>
            <person name="Goldman M.H.S."/>
            <person name="Gomes S.L."/>
            <person name="Gruber A."/>
            <person name="Ho P.L."/>
            <person name="Hoheisel J.D."/>
            <person name="Junqueira M.L."/>
            <person name="Kemper E.L."/>
            <person name="Kitajima J.P."/>
            <person name="Krieger J.E."/>
            <person name="Kuramae E.E."/>
            <person name="Laigret F."/>
            <person name="Lambais M.R."/>
            <person name="Leite L.C.C."/>
            <person name="Lemos E.G.M."/>
            <person name="Lemos M.V.F."/>
            <person name="Lopes S.A."/>
            <person name="Lopes C.R."/>
            <person name="Machado J.A."/>
            <person name="Machado M.A."/>
            <person name="Madeira A.M.B.N."/>
            <person name="Madeira H.M.F."/>
            <person name="Marino C.L."/>
            <person name="Marques M.V."/>
            <person name="Martins E.A.L."/>
            <person name="Martins E.M.F."/>
            <person name="Matsukuma A.Y."/>
            <person name="Menck C.F.M."/>
            <person name="Miracca E.C."/>
            <person name="Miyaki C.Y."/>
            <person name="Monteiro-Vitorello C.B."/>
            <person name="Moon D.H."/>
            <person name="Nagai M.A."/>
            <person name="Nascimento A.L.T.O."/>
            <person name="Netto L.E.S."/>
            <person name="Nhani A. Jr."/>
            <person name="Nobrega F.G."/>
            <person name="Nunes L.R."/>
            <person name="Oliveira M.A."/>
            <person name="de Oliveira M.C."/>
            <person name="de Oliveira R.C."/>
            <person name="Palmieri D.A."/>
            <person name="Paris A."/>
            <person name="Peixoto B.R."/>
            <person name="Pereira G.A.G."/>
            <person name="Pereira H.A. Jr."/>
            <person name="Pesquero J.B."/>
            <person name="Quaggio R.B."/>
            <person name="Roberto P.G."/>
            <person name="Rodrigues V."/>
            <person name="de Rosa A.J.M."/>
            <person name="de Rosa V.E. Jr."/>
            <person name="de Sa R.G."/>
            <person name="Santelli R.V."/>
            <person name="Sawasaki H.E."/>
            <person name="da Silva A.C.R."/>
            <person name="da Silva A.M."/>
            <person name="da Silva F.R."/>
            <person name="Silva W.A. Jr."/>
            <person name="da Silveira J.F."/>
            <person name="Silvestri M.L.Z."/>
            <person name="Siqueira W.J."/>
            <person name="de Souza A.A."/>
            <person name="de Souza A.P."/>
            <person name="Terenzi M.F."/>
            <person name="Truffi D."/>
            <person name="Tsai S.M."/>
            <person name="Tsuhako M.H."/>
            <person name="Vallada H."/>
            <person name="Van Sluys M.A."/>
            <person name="Verjovski-Almeida S."/>
            <person name="Vettore A.L."/>
            <person name="Zago M.A."/>
            <person name="Zatz M."/>
            <person name="Meidanis J."/>
            <person name="Setubal J.C."/>
        </authorList>
    </citation>
    <scope>NUCLEOTIDE SEQUENCE [LARGE SCALE GENOMIC DNA]</scope>
    <source>
        <strain>9a5c</strain>
    </source>
</reference>
<gene>
    <name evidence="1" type="primary">recR</name>
    <name type="ordered locus">XF_1809</name>
</gene>
<sequence>MSTHLLEQLIDAFRILPGVGQKTAQRMAYHVLEREREGGQRLADVLSRAIEKIGHCTECRDFSETKICAICANYSRDRHQLCVVESPPDRLAIEQATGYRGLYFILQGRLSPLDGIGPHELGLDHLGQRLAAGEVTELIIATNATVEGETTAHYLALLARQHGIRPSRLAQGLPLGGELEYLDRGTLSHAFGTRTEVV</sequence>
<proteinExistence type="inferred from homology"/>
<protein>
    <recommendedName>
        <fullName evidence="1">Recombination protein RecR</fullName>
    </recommendedName>
</protein>
<keyword id="KW-0227">DNA damage</keyword>
<keyword id="KW-0233">DNA recombination</keyword>
<keyword id="KW-0234">DNA repair</keyword>
<keyword id="KW-0479">Metal-binding</keyword>
<keyword id="KW-0862">Zinc</keyword>
<keyword id="KW-0863">Zinc-finger</keyword>
<organism>
    <name type="scientific">Xylella fastidiosa (strain 9a5c)</name>
    <dbReference type="NCBI Taxonomy" id="160492"/>
    <lineage>
        <taxon>Bacteria</taxon>
        <taxon>Pseudomonadati</taxon>
        <taxon>Pseudomonadota</taxon>
        <taxon>Gammaproteobacteria</taxon>
        <taxon>Lysobacterales</taxon>
        <taxon>Lysobacteraceae</taxon>
        <taxon>Xylella</taxon>
    </lineage>
</organism>
<dbReference type="EMBL" id="AE003849">
    <property type="protein sequence ID" value="AAF84616.1"/>
    <property type="status" value="ALT_INIT"/>
    <property type="molecule type" value="Genomic_DNA"/>
</dbReference>
<dbReference type="PIR" id="D82635">
    <property type="entry name" value="D82635"/>
</dbReference>
<dbReference type="RefSeq" id="WP_031337832.1">
    <property type="nucleotide sequence ID" value="NC_002488.3"/>
</dbReference>
<dbReference type="SMR" id="Q9PCH1"/>
<dbReference type="STRING" id="160492.XF_1809"/>
<dbReference type="KEGG" id="xfa:XF_1809"/>
<dbReference type="eggNOG" id="COG0353">
    <property type="taxonomic scope" value="Bacteria"/>
</dbReference>
<dbReference type="HOGENOM" id="CLU_060739_1_2_6"/>
<dbReference type="Proteomes" id="UP000000812">
    <property type="component" value="Chromosome"/>
</dbReference>
<dbReference type="GO" id="GO:0003677">
    <property type="term" value="F:DNA binding"/>
    <property type="evidence" value="ECO:0007669"/>
    <property type="project" value="UniProtKB-UniRule"/>
</dbReference>
<dbReference type="GO" id="GO:0008270">
    <property type="term" value="F:zinc ion binding"/>
    <property type="evidence" value="ECO:0007669"/>
    <property type="project" value="UniProtKB-KW"/>
</dbReference>
<dbReference type="GO" id="GO:0006310">
    <property type="term" value="P:DNA recombination"/>
    <property type="evidence" value="ECO:0007669"/>
    <property type="project" value="UniProtKB-UniRule"/>
</dbReference>
<dbReference type="GO" id="GO:0006281">
    <property type="term" value="P:DNA repair"/>
    <property type="evidence" value="ECO:0007669"/>
    <property type="project" value="UniProtKB-UniRule"/>
</dbReference>
<dbReference type="CDD" id="cd01025">
    <property type="entry name" value="TOPRIM_recR"/>
    <property type="match status" value="1"/>
</dbReference>
<dbReference type="Gene3D" id="3.40.1360.10">
    <property type="match status" value="1"/>
</dbReference>
<dbReference type="Gene3D" id="6.10.250.240">
    <property type="match status" value="1"/>
</dbReference>
<dbReference type="Gene3D" id="1.10.8.420">
    <property type="entry name" value="RecR Domain 1"/>
    <property type="match status" value="1"/>
</dbReference>
<dbReference type="HAMAP" id="MF_00017">
    <property type="entry name" value="RecR"/>
    <property type="match status" value="1"/>
</dbReference>
<dbReference type="InterPro" id="IPR000093">
    <property type="entry name" value="DNA_Rcmb_RecR"/>
</dbReference>
<dbReference type="InterPro" id="IPR023627">
    <property type="entry name" value="Rcmb_RecR"/>
</dbReference>
<dbReference type="InterPro" id="IPR015967">
    <property type="entry name" value="Rcmb_RecR_Znf"/>
</dbReference>
<dbReference type="InterPro" id="IPR006171">
    <property type="entry name" value="TOPRIM_dom"/>
</dbReference>
<dbReference type="InterPro" id="IPR034137">
    <property type="entry name" value="TOPRIM_RecR"/>
</dbReference>
<dbReference type="NCBIfam" id="TIGR00615">
    <property type="entry name" value="recR"/>
    <property type="match status" value="1"/>
</dbReference>
<dbReference type="PANTHER" id="PTHR30446">
    <property type="entry name" value="RECOMBINATION PROTEIN RECR"/>
    <property type="match status" value="1"/>
</dbReference>
<dbReference type="PANTHER" id="PTHR30446:SF0">
    <property type="entry name" value="RECOMBINATION PROTEIN RECR"/>
    <property type="match status" value="1"/>
</dbReference>
<dbReference type="Pfam" id="PF21175">
    <property type="entry name" value="RecR_C"/>
    <property type="match status" value="1"/>
</dbReference>
<dbReference type="Pfam" id="PF21176">
    <property type="entry name" value="RecR_HhH"/>
    <property type="match status" value="1"/>
</dbReference>
<dbReference type="Pfam" id="PF02132">
    <property type="entry name" value="RecR_ZnF"/>
    <property type="match status" value="1"/>
</dbReference>
<dbReference type="Pfam" id="PF13662">
    <property type="entry name" value="Toprim_4"/>
    <property type="match status" value="1"/>
</dbReference>
<dbReference type="SMART" id="SM00493">
    <property type="entry name" value="TOPRIM"/>
    <property type="match status" value="1"/>
</dbReference>
<dbReference type="SUPFAM" id="SSF111304">
    <property type="entry name" value="Recombination protein RecR"/>
    <property type="match status" value="1"/>
</dbReference>
<dbReference type="PROSITE" id="PS01300">
    <property type="entry name" value="RECR"/>
    <property type="match status" value="1"/>
</dbReference>
<dbReference type="PROSITE" id="PS50880">
    <property type="entry name" value="TOPRIM"/>
    <property type="match status" value="1"/>
</dbReference>
<name>RECR_XYLFA</name>
<evidence type="ECO:0000255" key="1">
    <source>
        <dbReference type="HAMAP-Rule" id="MF_00017"/>
    </source>
</evidence>
<evidence type="ECO:0000305" key="2"/>
<accession>Q9PCH1</accession>
<comment type="function">
    <text evidence="1">May play a role in DNA repair. It seems to be involved in an RecBC-independent recombinational process of DNA repair. It may act with RecF and RecO.</text>
</comment>
<comment type="similarity">
    <text evidence="1">Belongs to the RecR family.</text>
</comment>
<comment type="sequence caution" evidence="2">
    <conflict type="erroneous initiation">
        <sequence resource="EMBL-CDS" id="AAF84616"/>
    </conflict>
</comment>